<dbReference type="EC" id="1.1.1.30" evidence="2"/>
<dbReference type="SMR" id="P86198"/>
<dbReference type="GlyCosmos" id="P86198">
    <property type="glycosylation" value="1 site, No reported glycans"/>
</dbReference>
<dbReference type="Proteomes" id="UP000189706">
    <property type="component" value="Unplaced"/>
</dbReference>
<dbReference type="GO" id="GO:0099617">
    <property type="term" value="C:matrix side of mitochondrial inner membrane"/>
    <property type="evidence" value="ECO:0000250"/>
    <property type="project" value="UniProtKB"/>
</dbReference>
<dbReference type="GO" id="GO:0005759">
    <property type="term" value="C:mitochondrial matrix"/>
    <property type="evidence" value="ECO:0007669"/>
    <property type="project" value="UniProtKB-SubCell"/>
</dbReference>
<dbReference type="GO" id="GO:0003858">
    <property type="term" value="F:3-hydroxybutyrate dehydrogenase activity"/>
    <property type="evidence" value="ECO:0007669"/>
    <property type="project" value="UniProtKB-EC"/>
</dbReference>
<dbReference type="GO" id="GO:0008202">
    <property type="term" value="P:steroid metabolic process"/>
    <property type="evidence" value="ECO:0007669"/>
    <property type="project" value="TreeGrafter"/>
</dbReference>
<dbReference type="Gene3D" id="3.40.50.720">
    <property type="entry name" value="NAD(P)-binding Rossmann-like Domain"/>
    <property type="match status" value="2"/>
</dbReference>
<dbReference type="InterPro" id="IPR036291">
    <property type="entry name" value="NAD(P)-bd_dom_sf"/>
</dbReference>
<dbReference type="InterPro" id="IPR002347">
    <property type="entry name" value="SDR_fam"/>
</dbReference>
<dbReference type="PANTHER" id="PTHR43313:SF25">
    <property type="entry name" value="D-BETA-HYDROXYBUTYRATE DEHYDROGENASE, MITOCHONDRIAL"/>
    <property type="match status" value="1"/>
</dbReference>
<dbReference type="PANTHER" id="PTHR43313">
    <property type="entry name" value="SHORT-CHAIN DEHYDROGENASE/REDUCTASE FAMILY 9C"/>
    <property type="match status" value="1"/>
</dbReference>
<dbReference type="Pfam" id="PF00106">
    <property type="entry name" value="adh_short"/>
    <property type="match status" value="1"/>
</dbReference>
<dbReference type="SUPFAM" id="SSF51735">
    <property type="entry name" value="NAD(P)-binding Rossmann-fold domains"/>
    <property type="match status" value="1"/>
</dbReference>
<protein>
    <recommendedName>
        <fullName evidence="8">D-beta-hydroxybutyrate dehydrogenase, mitochondrial</fullName>
        <ecNumber evidence="2">1.1.1.30</ecNumber>
    </recommendedName>
    <alternativeName>
        <fullName evidence="4">3-hydroxybutyrate dehydrogenase</fullName>
        <shortName evidence="4">BDH</shortName>
    </alternativeName>
</protein>
<name>BDH_MESAU</name>
<proteinExistence type="evidence at protein level"/>
<accession>P86198</accession>
<reference key="1">
    <citation type="journal article" date="2010" name="Asian J. Androl.">
        <title>Glucose-regulated protein precursor (GRP78) and tumor rejection antigen (GP96) are unique to hamster caput epididymal spermatozoa.</title>
        <authorList>
            <person name="Kameshwari D.B."/>
            <person name="Bhande S."/>
            <person name="Sundaram C.S."/>
            <person name="Kota V."/>
            <person name="Siva A.B."/>
            <person name="Shivaji S."/>
        </authorList>
    </citation>
    <scope>IDENTIFICATION BY MASS SPECTROMETRY</scope>
</reference>
<evidence type="ECO:0000250" key="1"/>
<evidence type="ECO:0000250" key="2">
    <source>
        <dbReference type="UniProtKB" id="P29147"/>
    </source>
</evidence>
<evidence type="ECO:0000250" key="3">
    <source>
        <dbReference type="UniProtKB" id="Q02337"/>
    </source>
</evidence>
<evidence type="ECO:0000250" key="4">
    <source>
        <dbReference type="UniProtKB" id="Q02338"/>
    </source>
</evidence>
<evidence type="ECO:0000250" key="5">
    <source>
        <dbReference type="UniProtKB" id="Q80XN0"/>
    </source>
</evidence>
<evidence type="ECO:0000255" key="6"/>
<evidence type="ECO:0000255" key="7">
    <source>
        <dbReference type="PROSITE-ProRule" id="PRU10001"/>
    </source>
</evidence>
<evidence type="ECO:0000305" key="8"/>
<gene>
    <name evidence="4" type="primary">BDH1</name>
    <name evidence="4" type="synonym">BDH</name>
</gene>
<sequence length="132" mass="15007">AVLVTGCDSGFGFSLAKHLHSKGFLVFAGCLLKEVAEVNLWGTVRSFLPLLRRVVNISSMLGRSPYCITKFGVEAFSDCLRYEMHPLGVKVSVVEPGNFIAATSLYSPERMWDELPEVVRKYHPMDYYWWLR</sequence>
<feature type="chain" id="PRO_0000394393" description="D-beta-hydroxybutyrate dehydrogenase, mitochondrial">
    <location>
        <begin position="1" status="less than"/>
        <end position="132" status="greater than"/>
    </location>
</feature>
<feature type="active site" description="Proton acceptor" evidence="4 7">
    <location>
        <position position="66"/>
    </location>
</feature>
<feature type="binding site" evidence="4">
    <location>
        <begin position="3"/>
        <end position="27"/>
    </location>
    <ligand>
        <name>NAD(+)</name>
        <dbReference type="ChEBI" id="CHEBI:57540"/>
    </ligand>
</feature>
<feature type="binding site" evidence="4">
    <location>
        <position position="59"/>
    </location>
    <ligand>
        <name>substrate</name>
    </ligand>
</feature>
<feature type="modified residue" description="N6-acetyllysine" evidence="5">
    <location>
        <position position="17"/>
    </location>
</feature>
<feature type="modified residue" description="N6-acetyllysine" evidence="5">
    <location>
        <position position="70"/>
    </location>
</feature>
<feature type="modified residue" description="Phosphoserine" evidence="2">
    <location>
        <position position="104"/>
    </location>
</feature>
<feature type="glycosylation site" description="O-linked (GlcNAc) serine" evidence="1">
    <location>
        <position position="77"/>
    </location>
</feature>
<feature type="non-consecutive residues" evidence="8">
    <location>
        <begin position="33"/>
        <end position="34"/>
    </location>
</feature>
<feature type="non-consecutive residues" evidence="8">
    <location>
        <begin position="45"/>
        <end position="46"/>
    </location>
</feature>
<feature type="non-consecutive residues" evidence="8">
    <location>
        <begin position="53"/>
        <end position="54"/>
    </location>
</feature>
<feature type="non-consecutive residues" evidence="8">
    <location>
        <begin position="63"/>
        <end position="64"/>
    </location>
</feature>
<feature type="non-consecutive residues" evidence="8">
    <location>
        <begin position="110"/>
        <end position="111"/>
    </location>
</feature>
<feature type="non-consecutive residues" evidence="8">
    <location>
        <begin position="121"/>
        <end position="122"/>
    </location>
</feature>
<feature type="non-terminal residue">
    <location>
        <position position="1"/>
    </location>
</feature>
<feature type="non-terminal residue">
    <location>
        <position position="132"/>
    </location>
</feature>
<comment type="catalytic activity">
    <reaction evidence="2">
        <text>(R)-3-hydroxybutanoate + NAD(+) = acetoacetate + NADH + H(+)</text>
        <dbReference type="Rhea" id="RHEA:20521"/>
        <dbReference type="ChEBI" id="CHEBI:10983"/>
        <dbReference type="ChEBI" id="CHEBI:13705"/>
        <dbReference type="ChEBI" id="CHEBI:15378"/>
        <dbReference type="ChEBI" id="CHEBI:57540"/>
        <dbReference type="ChEBI" id="CHEBI:57945"/>
        <dbReference type="EC" id="1.1.1.30"/>
    </reaction>
</comment>
<comment type="activity regulation">
    <text evidence="3">Requires phosphatidylcholine as an allosteric activator for enzymatic activity.</text>
</comment>
<comment type="subunit">
    <text evidence="3">Homotetramer.</text>
</comment>
<comment type="subcellular location">
    <subcellularLocation>
        <location evidence="3">Mitochondrion inner membrane</location>
    </subcellularLocation>
    <subcellularLocation>
        <location evidence="3">Mitochondrion matrix</location>
    </subcellularLocation>
</comment>
<comment type="similarity">
    <text evidence="6">Belongs to the short-chain dehydrogenases/reductases (SDR) family.</text>
</comment>
<keyword id="KW-0007">Acetylation</keyword>
<keyword id="KW-0021">Allosteric enzyme</keyword>
<keyword id="KW-0325">Glycoprotein</keyword>
<keyword id="KW-0443">Lipid metabolism</keyword>
<keyword id="KW-0472">Membrane</keyword>
<keyword id="KW-0496">Mitochondrion</keyword>
<keyword id="KW-0999">Mitochondrion inner membrane</keyword>
<keyword id="KW-0520">NAD</keyword>
<keyword id="KW-0560">Oxidoreductase</keyword>
<keyword id="KW-0597">Phosphoprotein</keyword>
<keyword id="KW-1185">Reference proteome</keyword>
<organism>
    <name type="scientific">Mesocricetus auratus</name>
    <name type="common">Golden hamster</name>
    <dbReference type="NCBI Taxonomy" id="10036"/>
    <lineage>
        <taxon>Eukaryota</taxon>
        <taxon>Metazoa</taxon>
        <taxon>Chordata</taxon>
        <taxon>Craniata</taxon>
        <taxon>Vertebrata</taxon>
        <taxon>Euteleostomi</taxon>
        <taxon>Mammalia</taxon>
        <taxon>Eutheria</taxon>
        <taxon>Euarchontoglires</taxon>
        <taxon>Glires</taxon>
        <taxon>Rodentia</taxon>
        <taxon>Myomorpha</taxon>
        <taxon>Muroidea</taxon>
        <taxon>Cricetidae</taxon>
        <taxon>Cricetinae</taxon>
        <taxon>Mesocricetus</taxon>
    </lineage>
</organism>